<reference key="1">
    <citation type="journal article" date="1999" name="EMBO J.">
        <title>Constitutive silencing of IFN-beta promoter is mediated by NRF (NF-kB-repressing factor), a nuclear inhibitor of NF-kB.</title>
        <authorList>
            <person name="Nourbakhsh M."/>
            <person name="Hauser H."/>
        </authorList>
    </citation>
    <scope>NUCLEOTIDE SEQUENCE [MRNA] (ISOFORM 1)</scope>
    <scope>FUNCTION</scope>
    <scope>INTERACTION WITH NF-KAPPA-B</scope>
    <source>
        <tissue>Cervix carcinoma</tissue>
    </source>
</reference>
<reference key="2">
    <citation type="submission" date="2002-12" db="EMBL/GenBank/DDBJ databases">
        <title>Cloning and identification of human transcription factor NRF complete cDNA.</title>
        <authorList>
            <person name="Mao Y."/>
            <person name="Xie Y."/>
            <person name="Dai J."/>
        </authorList>
    </citation>
    <scope>NUCLEOTIDE SEQUENCE [MRNA] (ISOFORM 1)</scope>
</reference>
<reference key="3">
    <citation type="journal article" date="2005" name="Nature">
        <title>The DNA sequence of the human X chromosome.</title>
        <authorList>
            <person name="Ross M.T."/>
            <person name="Grafham D.V."/>
            <person name="Coffey A.J."/>
            <person name="Scherer S."/>
            <person name="McLay K."/>
            <person name="Muzny D."/>
            <person name="Platzer M."/>
            <person name="Howell G.R."/>
            <person name="Burrows C."/>
            <person name="Bird C.P."/>
            <person name="Frankish A."/>
            <person name="Lovell F.L."/>
            <person name="Howe K.L."/>
            <person name="Ashurst J.L."/>
            <person name="Fulton R.S."/>
            <person name="Sudbrak R."/>
            <person name="Wen G."/>
            <person name="Jones M.C."/>
            <person name="Hurles M.E."/>
            <person name="Andrews T.D."/>
            <person name="Scott C.E."/>
            <person name="Searle S."/>
            <person name="Ramser J."/>
            <person name="Whittaker A."/>
            <person name="Deadman R."/>
            <person name="Carter N.P."/>
            <person name="Hunt S.E."/>
            <person name="Chen R."/>
            <person name="Cree A."/>
            <person name="Gunaratne P."/>
            <person name="Havlak P."/>
            <person name="Hodgson A."/>
            <person name="Metzker M.L."/>
            <person name="Richards S."/>
            <person name="Scott G."/>
            <person name="Steffen D."/>
            <person name="Sodergren E."/>
            <person name="Wheeler D.A."/>
            <person name="Worley K.C."/>
            <person name="Ainscough R."/>
            <person name="Ambrose K.D."/>
            <person name="Ansari-Lari M.A."/>
            <person name="Aradhya S."/>
            <person name="Ashwell R.I."/>
            <person name="Babbage A.K."/>
            <person name="Bagguley C.L."/>
            <person name="Ballabio A."/>
            <person name="Banerjee R."/>
            <person name="Barker G.E."/>
            <person name="Barlow K.F."/>
            <person name="Barrett I.P."/>
            <person name="Bates K.N."/>
            <person name="Beare D.M."/>
            <person name="Beasley H."/>
            <person name="Beasley O."/>
            <person name="Beck A."/>
            <person name="Bethel G."/>
            <person name="Blechschmidt K."/>
            <person name="Brady N."/>
            <person name="Bray-Allen S."/>
            <person name="Bridgeman A.M."/>
            <person name="Brown A.J."/>
            <person name="Brown M.J."/>
            <person name="Bonnin D."/>
            <person name="Bruford E.A."/>
            <person name="Buhay C."/>
            <person name="Burch P."/>
            <person name="Burford D."/>
            <person name="Burgess J."/>
            <person name="Burrill W."/>
            <person name="Burton J."/>
            <person name="Bye J.M."/>
            <person name="Carder C."/>
            <person name="Carrel L."/>
            <person name="Chako J."/>
            <person name="Chapman J.C."/>
            <person name="Chavez D."/>
            <person name="Chen E."/>
            <person name="Chen G."/>
            <person name="Chen Y."/>
            <person name="Chen Z."/>
            <person name="Chinault C."/>
            <person name="Ciccodicola A."/>
            <person name="Clark S.Y."/>
            <person name="Clarke G."/>
            <person name="Clee C.M."/>
            <person name="Clegg S."/>
            <person name="Clerc-Blankenburg K."/>
            <person name="Clifford K."/>
            <person name="Cobley V."/>
            <person name="Cole C.G."/>
            <person name="Conquer J.S."/>
            <person name="Corby N."/>
            <person name="Connor R.E."/>
            <person name="David R."/>
            <person name="Davies J."/>
            <person name="Davis C."/>
            <person name="Davis J."/>
            <person name="Delgado O."/>
            <person name="Deshazo D."/>
            <person name="Dhami P."/>
            <person name="Ding Y."/>
            <person name="Dinh H."/>
            <person name="Dodsworth S."/>
            <person name="Draper H."/>
            <person name="Dugan-Rocha S."/>
            <person name="Dunham A."/>
            <person name="Dunn M."/>
            <person name="Durbin K.J."/>
            <person name="Dutta I."/>
            <person name="Eades T."/>
            <person name="Ellwood M."/>
            <person name="Emery-Cohen A."/>
            <person name="Errington H."/>
            <person name="Evans K.L."/>
            <person name="Faulkner L."/>
            <person name="Francis F."/>
            <person name="Frankland J."/>
            <person name="Fraser A.E."/>
            <person name="Galgoczy P."/>
            <person name="Gilbert J."/>
            <person name="Gill R."/>
            <person name="Gloeckner G."/>
            <person name="Gregory S.G."/>
            <person name="Gribble S."/>
            <person name="Griffiths C."/>
            <person name="Grocock R."/>
            <person name="Gu Y."/>
            <person name="Gwilliam R."/>
            <person name="Hamilton C."/>
            <person name="Hart E.A."/>
            <person name="Hawes A."/>
            <person name="Heath P.D."/>
            <person name="Heitmann K."/>
            <person name="Hennig S."/>
            <person name="Hernandez J."/>
            <person name="Hinzmann B."/>
            <person name="Ho S."/>
            <person name="Hoffs M."/>
            <person name="Howden P.J."/>
            <person name="Huckle E.J."/>
            <person name="Hume J."/>
            <person name="Hunt P.J."/>
            <person name="Hunt A.R."/>
            <person name="Isherwood J."/>
            <person name="Jacob L."/>
            <person name="Johnson D."/>
            <person name="Jones S."/>
            <person name="de Jong P.J."/>
            <person name="Joseph S.S."/>
            <person name="Keenan S."/>
            <person name="Kelly S."/>
            <person name="Kershaw J.K."/>
            <person name="Khan Z."/>
            <person name="Kioschis P."/>
            <person name="Klages S."/>
            <person name="Knights A.J."/>
            <person name="Kosiura A."/>
            <person name="Kovar-Smith C."/>
            <person name="Laird G.K."/>
            <person name="Langford C."/>
            <person name="Lawlor S."/>
            <person name="Leversha M."/>
            <person name="Lewis L."/>
            <person name="Liu W."/>
            <person name="Lloyd C."/>
            <person name="Lloyd D.M."/>
            <person name="Loulseged H."/>
            <person name="Loveland J.E."/>
            <person name="Lovell J.D."/>
            <person name="Lozado R."/>
            <person name="Lu J."/>
            <person name="Lyne R."/>
            <person name="Ma J."/>
            <person name="Maheshwari M."/>
            <person name="Matthews L.H."/>
            <person name="McDowall J."/>
            <person name="McLaren S."/>
            <person name="McMurray A."/>
            <person name="Meidl P."/>
            <person name="Meitinger T."/>
            <person name="Milne S."/>
            <person name="Miner G."/>
            <person name="Mistry S.L."/>
            <person name="Morgan M."/>
            <person name="Morris S."/>
            <person name="Mueller I."/>
            <person name="Mullikin J.C."/>
            <person name="Nguyen N."/>
            <person name="Nordsiek G."/>
            <person name="Nyakatura G."/>
            <person name="O'dell C.N."/>
            <person name="Okwuonu G."/>
            <person name="Palmer S."/>
            <person name="Pandian R."/>
            <person name="Parker D."/>
            <person name="Parrish J."/>
            <person name="Pasternak S."/>
            <person name="Patel D."/>
            <person name="Pearce A.V."/>
            <person name="Pearson D.M."/>
            <person name="Pelan S.E."/>
            <person name="Perez L."/>
            <person name="Porter K.M."/>
            <person name="Ramsey Y."/>
            <person name="Reichwald K."/>
            <person name="Rhodes S."/>
            <person name="Ridler K.A."/>
            <person name="Schlessinger D."/>
            <person name="Schueler M.G."/>
            <person name="Sehra H.K."/>
            <person name="Shaw-Smith C."/>
            <person name="Shen H."/>
            <person name="Sheridan E.M."/>
            <person name="Shownkeen R."/>
            <person name="Skuce C.D."/>
            <person name="Smith M.L."/>
            <person name="Sotheran E.C."/>
            <person name="Steingruber H.E."/>
            <person name="Steward C.A."/>
            <person name="Storey R."/>
            <person name="Swann R.M."/>
            <person name="Swarbreck D."/>
            <person name="Tabor P.E."/>
            <person name="Taudien S."/>
            <person name="Taylor T."/>
            <person name="Teague B."/>
            <person name="Thomas K."/>
            <person name="Thorpe A."/>
            <person name="Timms K."/>
            <person name="Tracey A."/>
            <person name="Trevanion S."/>
            <person name="Tromans A.C."/>
            <person name="d'Urso M."/>
            <person name="Verduzco D."/>
            <person name="Villasana D."/>
            <person name="Waldron L."/>
            <person name="Wall M."/>
            <person name="Wang Q."/>
            <person name="Warren J."/>
            <person name="Warry G.L."/>
            <person name="Wei X."/>
            <person name="West A."/>
            <person name="Whitehead S.L."/>
            <person name="Whiteley M.N."/>
            <person name="Wilkinson J.E."/>
            <person name="Willey D.L."/>
            <person name="Williams G."/>
            <person name="Williams L."/>
            <person name="Williamson A."/>
            <person name="Williamson H."/>
            <person name="Wilming L."/>
            <person name="Woodmansey R.L."/>
            <person name="Wray P.W."/>
            <person name="Yen J."/>
            <person name="Zhang J."/>
            <person name="Zhou J."/>
            <person name="Zoghbi H."/>
            <person name="Zorilla S."/>
            <person name="Buck D."/>
            <person name="Reinhardt R."/>
            <person name="Poustka A."/>
            <person name="Rosenthal A."/>
            <person name="Lehrach H."/>
            <person name="Meindl A."/>
            <person name="Minx P.J."/>
            <person name="Hillier L.W."/>
            <person name="Willard H.F."/>
            <person name="Wilson R.K."/>
            <person name="Waterston R.H."/>
            <person name="Rice C.M."/>
            <person name="Vaudin M."/>
            <person name="Coulson A."/>
            <person name="Nelson D.L."/>
            <person name="Weinstock G."/>
            <person name="Sulston J.E."/>
            <person name="Durbin R.M."/>
            <person name="Hubbard T."/>
            <person name="Gibbs R.A."/>
            <person name="Beck S."/>
            <person name="Rogers J."/>
            <person name="Bentley D.R."/>
        </authorList>
    </citation>
    <scope>NUCLEOTIDE SEQUENCE [LARGE SCALE GENOMIC DNA]</scope>
</reference>
<reference key="4">
    <citation type="submission" date="2005-09" db="EMBL/GenBank/DDBJ databases">
        <authorList>
            <person name="Mural R.J."/>
            <person name="Istrail S."/>
            <person name="Sutton G."/>
            <person name="Florea L."/>
            <person name="Halpern A.L."/>
            <person name="Mobarry C.M."/>
            <person name="Lippert R."/>
            <person name="Walenz B."/>
            <person name="Shatkay H."/>
            <person name="Dew I."/>
            <person name="Miller J.R."/>
            <person name="Flanigan M.J."/>
            <person name="Edwards N.J."/>
            <person name="Bolanos R."/>
            <person name="Fasulo D."/>
            <person name="Halldorsson B.V."/>
            <person name="Hannenhalli S."/>
            <person name="Turner R."/>
            <person name="Yooseph S."/>
            <person name="Lu F."/>
            <person name="Nusskern D.R."/>
            <person name="Shue B.C."/>
            <person name="Zheng X.H."/>
            <person name="Zhong F."/>
            <person name="Delcher A.L."/>
            <person name="Huson D.H."/>
            <person name="Kravitz S.A."/>
            <person name="Mouchard L."/>
            <person name="Reinert K."/>
            <person name="Remington K.A."/>
            <person name="Clark A.G."/>
            <person name="Waterman M.S."/>
            <person name="Eichler E.E."/>
            <person name="Adams M.D."/>
            <person name="Hunkapiller M.W."/>
            <person name="Myers E.W."/>
            <person name="Venter J.C."/>
        </authorList>
    </citation>
    <scope>NUCLEOTIDE SEQUENCE [LARGE SCALE GENOMIC DNA]</scope>
</reference>
<reference key="5">
    <citation type="journal article" date="2004" name="Genome Res.">
        <title>The status, quality, and expansion of the NIH full-length cDNA project: the Mammalian Gene Collection (MGC).</title>
        <authorList>
            <consortium name="The MGC Project Team"/>
        </authorList>
    </citation>
    <scope>NUCLEOTIDE SEQUENCE [LARGE SCALE MRNA] (ISOFORM 1)</scope>
    <source>
        <tissue>Pancreas</tissue>
        <tissue>Skin</tissue>
    </source>
</reference>
<reference key="6">
    <citation type="submission" date="2003-04" db="EMBL/GenBank/DDBJ databases">
        <title>Full-length cDNA libraries and normalization.</title>
        <authorList>
            <person name="Li W.B."/>
            <person name="Gruber C."/>
            <person name="Jessee J."/>
            <person name="Polayes D."/>
        </authorList>
    </citation>
    <scope>NUCLEOTIDE SEQUENCE [LARGE SCALE MRNA] OF 1-258 (ISOFORM 2)</scope>
    <source>
        <tissue>Fetal brain</tissue>
    </source>
</reference>
<reference key="7">
    <citation type="journal article" date="1997" name="Gene">
        <title>Identification of a new member (ZNF183) of the Ring finger gene family in Xq24-25.</title>
        <authorList>
            <person name="Frattini A."/>
            <person name="Faranda S."/>
            <person name="Bagnasco L."/>
            <person name="Patrosso C."/>
            <person name="Nulli P."/>
            <person name="Zucchi I."/>
            <person name="Vezzoni P."/>
        </authorList>
    </citation>
    <scope>NUCLEOTIDE SEQUENCE [MRNA] OF 453-690 (ISOFORM 1/2)</scope>
    <source>
        <tissue>Brain</tissue>
    </source>
</reference>
<reference key="8">
    <citation type="journal article" date="2002" name="Proc. Natl. Acad. Sci. U.S.A.">
        <title>Identification of a negative response element in the human inducible nitric-oxide synthase (hiNOS) promoter: the role of NF-kappa B-repressing factor (NRF) in basal repression of the hiNOS gene.</title>
        <authorList>
            <person name="Feng X."/>
            <person name="Guo Z."/>
            <person name="Nourbakhsh M."/>
            <person name="Hauser H."/>
            <person name="Ganster R."/>
            <person name="Shao L."/>
            <person name="Geller D.A."/>
        </authorList>
    </citation>
    <scope>FUNCTION</scope>
</reference>
<reference key="9">
    <citation type="journal article" date="2002" name="Mol. Biol. Cell">
        <title>Functional proteomic analysis of human nucleolus.</title>
        <authorList>
            <person name="Scherl A."/>
            <person name="Coute Y."/>
            <person name="Deon C."/>
            <person name="Calle A."/>
            <person name="Kindbeiter K."/>
            <person name="Sanchez J.-C."/>
            <person name="Greco A."/>
            <person name="Hochstrasser D.F."/>
            <person name="Diaz J.-J."/>
        </authorList>
    </citation>
    <scope>SUBCELLULAR LOCATION [LARGE SCALE ANALYSIS]</scope>
    <source>
        <tissue>Cervix carcinoma</tissue>
    </source>
</reference>
<reference key="10">
    <citation type="journal article" date="2011" name="BMC Syst. Biol.">
        <title>Initial characterization of the human central proteome.</title>
        <authorList>
            <person name="Burkard T.R."/>
            <person name="Planyavsky M."/>
            <person name="Kaupe I."/>
            <person name="Breitwieser F.P."/>
            <person name="Buerckstuemmer T."/>
            <person name="Bennett K.L."/>
            <person name="Superti-Furga G."/>
            <person name="Colinge J."/>
        </authorList>
    </citation>
    <scope>IDENTIFICATION BY MASS SPECTROMETRY [LARGE SCALE ANALYSIS]</scope>
</reference>
<reference key="11">
    <citation type="journal article" date="2013" name="J. Proteome Res.">
        <title>Toward a comprehensive characterization of a human cancer cell phosphoproteome.</title>
        <authorList>
            <person name="Zhou H."/>
            <person name="Di Palma S."/>
            <person name="Preisinger C."/>
            <person name="Peng M."/>
            <person name="Polat A.N."/>
            <person name="Heck A.J."/>
            <person name="Mohammed S."/>
        </authorList>
    </citation>
    <scope>PHOSPHORYLATION [LARGE SCALE ANALYSIS] AT SER-618</scope>
    <scope>IDENTIFICATION BY MASS SPECTROMETRY [LARGE SCALE ANALYSIS]</scope>
    <source>
        <tissue>Cervix carcinoma</tissue>
        <tissue>Erythroleukemia</tissue>
    </source>
</reference>
<reference key="12">
    <citation type="journal article" date="2014" name="Mol. Cell">
        <title>PAXT-1 promotes XRN2 activity by stabilizing it through a conserved domain.</title>
        <authorList>
            <person name="Miki T.S."/>
            <person name="Richter H."/>
            <person name="Rueegger S."/>
            <person name="Grosshans H."/>
        </authorList>
    </citation>
    <scope>INTERACTION WITH XRN2</scope>
</reference>
<reference key="13">
    <citation type="journal article" date="2014" name="Nat. Struct. Mol. Biol.">
        <title>Uncovering global SUMOylation signaling networks in a site-specific manner.</title>
        <authorList>
            <person name="Hendriks I.A."/>
            <person name="D'Souza R.C."/>
            <person name="Yang B."/>
            <person name="Verlaan-de Vries M."/>
            <person name="Mann M."/>
            <person name="Vertegaal A.C."/>
        </authorList>
    </citation>
    <scope>SUMOYLATION [LARGE SCALE ANALYSIS] AT LYS-500 AND LYS-674</scope>
    <scope>IDENTIFICATION BY MASS SPECTROMETRY [LARGE SCALE ANALYSIS]</scope>
</reference>
<reference key="14">
    <citation type="journal article" date="2017" name="Nat. Struct. Mol. Biol.">
        <title>Site-specific mapping of the human SUMO proteome reveals co-modification with phosphorylation.</title>
        <authorList>
            <person name="Hendriks I.A."/>
            <person name="Lyon D."/>
            <person name="Young C."/>
            <person name="Jensen L.J."/>
            <person name="Vertegaal A.C."/>
            <person name="Nielsen M.L."/>
        </authorList>
    </citation>
    <scope>SUMOYLATION [LARGE SCALE ANALYSIS] AT LYS-68; LYS-666 AND LYS-674</scope>
    <scope>IDENTIFICATION BY MASS SPECTROMETRY [LARGE SCALE ANALYSIS]</scope>
</reference>
<reference evidence="14 15" key="15">
    <citation type="journal article" date="2020" name="Proc. Natl. Acad. Sci. U.S.A.">
        <title>Structural basis for DEAH-helicase activation by G-patch proteins.</title>
        <authorList>
            <person name="Studer M.K."/>
            <person name="Ivanovic L."/>
            <person name="Weber M.E."/>
            <person name="Marti S."/>
            <person name="Jonas S."/>
        </authorList>
    </citation>
    <scope>X-RAY CRYSTALLOGRAPHY (1.85 ANGSTROMS) OF 541-603 IN COMPLEX WITH DHX15</scope>
    <scope>FUNCTION</scope>
    <scope>INTERACTION WITH DHX15</scope>
    <scope>MUTAGENESIS OF GLY-555; LEU-559; TRP-564; LEU-569; GLY-590 AND LEU-591</scope>
</reference>
<dbReference type="EMBL" id="AJ011812">
    <property type="protein sequence ID" value="CAB56459.1"/>
    <property type="status" value="ALT_FRAME"/>
    <property type="molecule type" value="mRNA"/>
</dbReference>
<dbReference type="EMBL" id="AY208891">
    <property type="protein sequence ID" value="AAP43025.1"/>
    <property type="molecule type" value="mRNA"/>
</dbReference>
<dbReference type="EMBL" id="AC004913">
    <property type="status" value="NOT_ANNOTATED_CDS"/>
    <property type="molecule type" value="Genomic_DNA"/>
</dbReference>
<dbReference type="EMBL" id="CH471161">
    <property type="protein sequence ID" value="EAW89859.1"/>
    <property type="molecule type" value="Genomic_DNA"/>
</dbReference>
<dbReference type="EMBL" id="BC040379">
    <property type="protein sequence ID" value="AAH40379.1"/>
    <property type="molecule type" value="mRNA"/>
</dbReference>
<dbReference type="EMBL" id="BC047878">
    <property type="protein sequence ID" value="AAH47878.1"/>
    <property type="molecule type" value="mRNA"/>
</dbReference>
<dbReference type="EMBL" id="AL539002">
    <property type="status" value="NOT_ANNOTATED_CDS"/>
    <property type="molecule type" value="mRNA"/>
</dbReference>
<dbReference type="EMBL" id="Y07707">
    <property type="protein sequence ID" value="CAA68976.1"/>
    <property type="molecule type" value="mRNA"/>
</dbReference>
<dbReference type="RefSeq" id="NP_001166958.1">
    <property type="nucleotide sequence ID" value="NM_001173487.1"/>
</dbReference>
<dbReference type="RefSeq" id="NP_001166959.1">
    <property type="nucleotide sequence ID" value="NM_001173488.1"/>
</dbReference>
<dbReference type="RefSeq" id="NP_060014.2">
    <property type="nucleotide sequence ID" value="NM_017544.3"/>
</dbReference>
<dbReference type="RefSeq" id="XP_011529667.1">
    <property type="nucleotide sequence ID" value="XM_011531365.2"/>
</dbReference>
<dbReference type="RefSeq" id="XP_054183376.1">
    <molecule id="O15226-1"/>
    <property type="nucleotide sequence ID" value="XM_054327401.1"/>
</dbReference>
<dbReference type="RefSeq" id="XP_054183377.1">
    <molecule id="O15226-1"/>
    <property type="nucleotide sequence ID" value="XM_054327402.1"/>
</dbReference>
<dbReference type="RefSeq" id="XP_054189304.1">
    <molecule id="O15226-1"/>
    <property type="nucleotide sequence ID" value="XM_054333329.1"/>
</dbReference>
<dbReference type="RefSeq" id="XP_054189305.1">
    <molecule id="O15226-1"/>
    <property type="nucleotide sequence ID" value="XM_054333330.1"/>
</dbReference>
<dbReference type="PDB" id="6SH6">
    <property type="method" value="X-ray"/>
    <property type="resolution" value="1.85 A"/>
    <property type="chains" value="B=541-603"/>
</dbReference>
<dbReference type="PDB" id="6SH7">
    <property type="method" value="X-ray"/>
    <property type="resolution" value="2.21 A"/>
    <property type="chains" value="B=541-603"/>
</dbReference>
<dbReference type="PDBsum" id="6SH6"/>
<dbReference type="PDBsum" id="6SH7"/>
<dbReference type="SMR" id="O15226"/>
<dbReference type="BioGRID" id="121002">
    <property type="interactions" value="281"/>
</dbReference>
<dbReference type="DIP" id="DIP-34570N"/>
<dbReference type="FunCoup" id="O15226">
    <property type="interactions" value="2549"/>
</dbReference>
<dbReference type="IntAct" id="O15226">
    <property type="interactions" value="161"/>
</dbReference>
<dbReference type="MINT" id="O15226"/>
<dbReference type="STRING" id="9606.ENSP00000442308"/>
<dbReference type="ChEMBL" id="CHEMBL3163"/>
<dbReference type="GlyGen" id="O15226">
    <property type="glycosylation" value="1 site, 1 O-linked glycan (1 site)"/>
</dbReference>
<dbReference type="iPTMnet" id="O15226"/>
<dbReference type="MetOSite" id="O15226"/>
<dbReference type="PhosphoSitePlus" id="O15226"/>
<dbReference type="SwissPalm" id="O15226"/>
<dbReference type="BioMuta" id="NKRF"/>
<dbReference type="jPOST" id="O15226"/>
<dbReference type="MassIVE" id="O15226"/>
<dbReference type="PaxDb" id="9606-ENSP00000442308"/>
<dbReference type="PeptideAtlas" id="O15226"/>
<dbReference type="ProteomicsDB" id="32386"/>
<dbReference type="ProteomicsDB" id="48517">
    <molecule id="O15226-1"/>
</dbReference>
<dbReference type="Pumba" id="O15226"/>
<dbReference type="Antibodypedia" id="462">
    <property type="antibodies" value="211 antibodies from 31 providers"/>
</dbReference>
<dbReference type="DNASU" id="55922"/>
<dbReference type="Ensembl" id="ENST00000304449.8">
    <molecule id="O15226-1"/>
    <property type="protein sequence ID" value="ENSP00000304803.5"/>
    <property type="gene ID" value="ENSG00000186416.18"/>
</dbReference>
<dbReference type="Ensembl" id="ENST00000542113.3">
    <molecule id="O15226-2"/>
    <property type="protein sequence ID" value="ENSP00000442308.1"/>
    <property type="gene ID" value="ENSG00000186416.18"/>
</dbReference>
<dbReference type="GeneID" id="55922"/>
<dbReference type="UCSC" id="uc004erq.3">
    <molecule id="O15226-1"/>
    <property type="organism name" value="human"/>
</dbReference>
<dbReference type="AGR" id="HGNC:19374"/>
<dbReference type="CTD" id="55922"/>
<dbReference type="DisGeNET" id="55922"/>
<dbReference type="GeneCards" id="NKRF"/>
<dbReference type="HGNC" id="HGNC:19374">
    <property type="gene designation" value="NKRF"/>
</dbReference>
<dbReference type="HPA" id="ENSG00000186416">
    <property type="expression patterns" value="Low tissue specificity"/>
</dbReference>
<dbReference type="MIM" id="300440">
    <property type="type" value="gene"/>
</dbReference>
<dbReference type="neXtProt" id="NX_O15226"/>
<dbReference type="OpenTargets" id="ENSG00000186416"/>
<dbReference type="PharmGKB" id="PA134990602"/>
<dbReference type="VEuPathDB" id="HostDB:ENSG00000186416"/>
<dbReference type="eggNOG" id="KOG1721">
    <property type="taxonomic scope" value="Eukaryota"/>
</dbReference>
<dbReference type="GeneTree" id="ENSGT00940000157256"/>
<dbReference type="HOGENOM" id="CLU_025268_0_0_1"/>
<dbReference type="InParanoid" id="O15226"/>
<dbReference type="OrthoDB" id="29523at2759"/>
<dbReference type="PAN-GO" id="O15226">
    <property type="GO annotations" value="4 GO annotations based on evolutionary models"/>
</dbReference>
<dbReference type="PhylomeDB" id="O15226"/>
<dbReference type="TreeFam" id="TF326321"/>
<dbReference type="PathwayCommons" id="O15226"/>
<dbReference type="SignaLink" id="O15226"/>
<dbReference type="SIGNOR" id="O15226"/>
<dbReference type="BioGRID-ORCS" id="55922">
    <property type="hits" value="11 hits in 784 CRISPR screens"/>
</dbReference>
<dbReference type="CD-CODE" id="232F8A39">
    <property type="entry name" value="P-body"/>
</dbReference>
<dbReference type="CD-CODE" id="91857CE7">
    <property type="entry name" value="Nucleolus"/>
</dbReference>
<dbReference type="CD-CODE" id="DEE660B4">
    <property type="entry name" value="Stress granule"/>
</dbReference>
<dbReference type="ChiTaRS" id="NKRF">
    <property type="organism name" value="human"/>
</dbReference>
<dbReference type="GeneWiki" id="NKRF_(gene)"/>
<dbReference type="GenomeRNAi" id="55922"/>
<dbReference type="Pharos" id="O15226">
    <property type="development level" value="Tbio"/>
</dbReference>
<dbReference type="PRO" id="PR:O15226"/>
<dbReference type="Proteomes" id="UP000005640">
    <property type="component" value="Chromosome X"/>
</dbReference>
<dbReference type="RNAct" id="O15226">
    <property type="molecule type" value="protein"/>
</dbReference>
<dbReference type="Bgee" id="ENSG00000186416">
    <property type="expression patterns" value="Expressed in postcentral gyrus and 177 other cell types or tissues"/>
</dbReference>
<dbReference type="ExpressionAtlas" id="O15226">
    <property type="expression patterns" value="baseline and differential"/>
</dbReference>
<dbReference type="GO" id="GO:0005730">
    <property type="term" value="C:nucleolus"/>
    <property type="evidence" value="ECO:0000314"/>
    <property type="project" value="HPA"/>
</dbReference>
<dbReference type="GO" id="GO:0005654">
    <property type="term" value="C:nucleoplasm"/>
    <property type="evidence" value="ECO:0000314"/>
    <property type="project" value="HPA"/>
</dbReference>
<dbReference type="GO" id="GO:0005634">
    <property type="term" value="C:nucleus"/>
    <property type="evidence" value="ECO:0000314"/>
    <property type="project" value="UniProtKB"/>
</dbReference>
<dbReference type="GO" id="GO:0001671">
    <property type="term" value="F:ATPase activator activity"/>
    <property type="evidence" value="ECO:0000314"/>
    <property type="project" value="UniProtKB"/>
</dbReference>
<dbReference type="GO" id="GO:0001228">
    <property type="term" value="F:DNA-binding transcription activator activity, RNA polymerase II-specific"/>
    <property type="evidence" value="ECO:0000314"/>
    <property type="project" value="NTNU_SB"/>
</dbReference>
<dbReference type="GO" id="GO:0003723">
    <property type="term" value="F:RNA binding"/>
    <property type="evidence" value="ECO:0007005"/>
    <property type="project" value="UniProtKB"/>
</dbReference>
<dbReference type="GO" id="GO:0000978">
    <property type="term" value="F:RNA polymerase II cis-regulatory region sequence-specific DNA binding"/>
    <property type="evidence" value="ECO:0000314"/>
    <property type="project" value="NTNU_SB"/>
</dbReference>
<dbReference type="GO" id="GO:0045892">
    <property type="term" value="P:negative regulation of DNA-templated transcription"/>
    <property type="evidence" value="ECO:0000314"/>
    <property type="project" value="UniProtKB"/>
</dbReference>
<dbReference type="GO" id="GO:0045944">
    <property type="term" value="P:positive regulation of transcription by RNA polymerase II"/>
    <property type="evidence" value="ECO:0000314"/>
    <property type="project" value="NTNU_SB"/>
</dbReference>
<dbReference type="CDD" id="cd02640">
    <property type="entry name" value="R3H_NRF"/>
    <property type="match status" value="1"/>
</dbReference>
<dbReference type="FunFam" id="3.30.1370.50:FF:000004">
    <property type="entry name" value="NFKB repressing factor"/>
    <property type="match status" value="1"/>
</dbReference>
<dbReference type="FunFam" id="3.30.160.20:FF:000030">
    <property type="entry name" value="NFKB repressing factor"/>
    <property type="match status" value="1"/>
</dbReference>
<dbReference type="FunFam" id="3.30.160.20:FF:000034">
    <property type="entry name" value="NFKB repressing factor"/>
    <property type="match status" value="1"/>
</dbReference>
<dbReference type="Gene3D" id="3.30.160.20">
    <property type="match status" value="2"/>
</dbReference>
<dbReference type="Gene3D" id="3.30.1370.50">
    <property type="entry name" value="R3H-like domain"/>
    <property type="match status" value="1"/>
</dbReference>
<dbReference type="InterPro" id="IPR014720">
    <property type="entry name" value="dsRBD_dom"/>
</dbReference>
<dbReference type="InterPro" id="IPR000467">
    <property type="entry name" value="G_patch_dom"/>
</dbReference>
<dbReference type="InterPro" id="IPR001374">
    <property type="entry name" value="R3H_dom"/>
</dbReference>
<dbReference type="InterPro" id="IPR036867">
    <property type="entry name" value="R3H_dom_sf"/>
</dbReference>
<dbReference type="InterPro" id="IPR034071">
    <property type="entry name" value="R3H_NRF"/>
</dbReference>
<dbReference type="PANTHER" id="PTHR16148:SF15">
    <property type="entry name" value="NF-KAPPA-B-REPRESSING FACTOR"/>
    <property type="match status" value="1"/>
</dbReference>
<dbReference type="PANTHER" id="PTHR16148">
    <property type="entry name" value="NF-KAPPA-B-REPRESSING FACTOR-RELATED"/>
    <property type="match status" value="1"/>
</dbReference>
<dbReference type="Pfam" id="PF01585">
    <property type="entry name" value="G-patch"/>
    <property type="match status" value="1"/>
</dbReference>
<dbReference type="Pfam" id="PF01424">
    <property type="entry name" value="R3H"/>
    <property type="match status" value="1"/>
</dbReference>
<dbReference type="SMART" id="SM00358">
    <property type="entry name" value="DSRM"/>
    <property type="match status" value="2"/>
</dbReference>
<dbReference type="SMART" id="SM00443">
    <property type="entry name" value="G_patch"/>
    <property type="match status" value="1"/>
</dbReference>
<dbReference type="SMART" id="SM00393">
    <property type="entry name" value="R3H"/>
    <property type="match status" value="1"/>
</dbReference>
<dbReference type="SUPFAM" id="SSF54768">
    <property type="entry name" value="dsRNA-binding domain-like"/>
    <property type="match status" value="2"/>
</dbReference>
<dbReference type="SUPFAM" id="SSF82708">
    <property type="entry name" value="R3H domain"/>
    <property type="match status" value="1"/>
</dbReference>
<dbReference type="PROSITE" id="PS50174">
    <property type="entry name" value="G_PATCH"/>
    <property type="match status" value="1"/>
</dbReference>
<dbReference type="PROSITE" id="PS51061">
    <property type="entry name" value="R3H"/>
    <property type="match status" value="1"/>
</dbReference>
<protein>
    <recommendedName>
        <fullName>NF-kappa-B-repressing factor</fullName>
        <shortName evidence="9">NFkB-repressing factor</shortName>
        <shortName evidence="9">NRF</shortName>
    </recommendedName>
    <alternativeName>
        <fullName>Protein ITBA4</fullName>
    </alternativeName>
</protein>
<feature type="chain" id="PRO_0000096869" description="NF-kappa-B-repressing factor">
    <location>
        <begin position="1"/>
        <end position="690"/>
    </location>
</feature>
<feature type="domain" description="G-patch" evidence="1">
    <location>
        <begin position="551"/>
        <end position="596"/>
    </location>
</feature>
<feature type="domain" description="R3H" evidence="2">
    <location>
        <begin position="600"/>
        <end position="664"/>
    </location>
</feature>
<feature type="DNA-binding region" evidence="4">
    <location>
        <begin position="296"/>
        <end position="388"/>
    </location>
</feature>
<feature type="region of interest" description="Active repression domain" evidence="4">
    <location>
        <begin position="1"/>
        <end position="296"/>
    </location>
</feature>
<feature type="region of interest" description="Disordered" evidence="3">
    <location>
        <begin position="27"/>
        <end position="87"/>
    </location>
</feature>
<feature type="region of interest" description="Disordered" evidence="3">
    <location>
        <begin position="132"/>
        <end position="163"/>
    </location>
</feature>
<feature type="region of interest" description="Disordered" evidence="3">
    <location>
        <begin position="414"/>
        <end position="437"/>
    </location>
</feature>
<feature type="short sequence motif" description="Nuclear localization signal" evidence="4">
    <location>
        <begin position="25"/>
        <end position="45"/>
    </location>
</feature>
<feature type="compositionally biased region" description="Low complexity" evidence="3">
    <location>
        <begin position="142"/>
        <end position="163"/>
    </location>
</feature>
<feature type="compositionally biased region" description="Polar residues" evidence="3">
    <location>
        <begin position="414"/>
        <end position="431"/>
    </location>
</feature>
<feature type="modified residue" description="Phosphoserine" evidence="16">
    <location>
        <position position="618"/>
    </location>
</feature>
<feature type="cross-link" description="Glycyl lysine isopeptide (Lys-Gly) (interchain with G-Cter in SUMO2)" evidence="18">
    <location>
        <position position="68"/>
    </location>
</feature>
<feature type="cross-link" description="Glycyl lysine isopeptide (Lys-Gly) (interchain with G-Cter in SUMO2)" evidence="17">
    <location>
        <position position="500"/>
    </location>
</feature>
<feature type="cross-link" description="Glycyl lysine isopeptide (Lys-Gly) (interchain with G-Cter in SUMO2)" evidence="18">
    <location>
        <position position="666"/>
    </location>
</feature>
<feature type="cross-link" description="Glycyl lysine isopeptide (Lys-Gly) (interchain with G-Cter in SUMO2)" evidence="17 18">
    <location>
        <position position="674"/>
    </location>
</feature>
<feature type="splice variant" id="VSP_047377" description="In isoform 2." evidence="11">
    <original>M</original>
    <variation>MGFMLPLIFRYSPRLM</variation>
    <location>
        <position position="1"/>
    </location>
</feature>
<feature type="mutagenesis site" description="Abolished interaction with DHX15." evidence="8">
    <original>G</original>
    <variation>E</variation>
    <location>
        <position position="555"/>
    </location>
</feature>
<feature type="mutagenesis site" description="Abolished interaction with DHX15." evidence="8">
    <original>L</original>
    <variation>E</variation>
    <location>
        <position position="559"/>
    </location>
</feature>
<feature type="mutagenesis site" description="Abolished interaction with DHX15." evidence="8">
    <original>W</original>
    <variation>A</variation>
    <location>
        <position position="564"/>
    </location>
</feature>
<feature type="mutagenesis site" description="Abolished interaction with DHX15." evidence="8">
    <original>L</original>
    <variation>E</variation>
    <location>
        <position position="569"/>
    </location>
</feature>
<feature type="mutagenesis site" description="Decreased, but not abolished interaction, with DHX15." evidence="8">
    <original>G</original>
    <variation>E</variation>
    <location>
        <position position="590"/>
    </location>
</feature>
<feature type="mutagenesis site" description="Decreased, but not abolished interaction, with DHX15." evidence="8">
    <original>L</original>
    <variation>E</variation>
    <location>
        <position position="591"/>
    </location>
</feature>
<feature type="sequence conflict" description="In Ref. 1; CAB56459." evidence="12" ref="1">
    <original>R</original>
    <variation>G</variation>
    <location>
        <position position="71"/>
    </location>
</feature>
<feature type="sequence conflict" description="In Ref. 7; CAA68976." evidence="12" ref="7">
    <original>C</original>
    <variation>G</variation>
    <location>
        <position position="453"/>
    </location>
</feature>
<feature type="sequence conflict" description="In Ref. 1; CAB56459." evidence="12" ref="1">
    <original>AR</original>
    <variation>ES</variation>
    <location>
        <begin position="614"/>
        <end position="615"/>
    </location>
</feature>
<feature type="helix" evidence="19">
    <location>
        <begin position="554"/>
        <end position="561"/>
    </location>
</feature>
<feature type="strand" evidence="20">
    <location>
        <begin position="570"/>
        <end position="573"/>
    </location>
</feature>
<feature type="turn" evidence="20">
    <location>
        <begin position="591"/>
        <end position="595"/>
    </location>
</feature>
<comment type="function">
    <text evidence="4 5">Enhances the ATPase activity of DHX15 by acting like a brace that tethers mobile sections of DHX15 together, stabilizing a functional conformation with high RNA affinity of DHX15 (PubMed:12381793). Involved in the constitutive silencing of the interferon beta promoter, independently of the virus-induced signals, and in the inhibition of the basal and cytokine-induced iNOS promoter activity (PubMed:12381793). Also involved in the regulation of IL-8 transcription (PubMed:12381793). May also act as a DNA-binding transcription regulator: interacts with a specific negative regulatory element (NRE) 5'-AATTCCTCTGA-3' to mediate transcriptional repression of certain NK-kappa-B responsive genes (PubMed:10562553).</text>
</comment>
<comment type="subunit">
    <text evidence="4 7 8">Interacts with NF-kappa-B (PubMed:10562553). Interacts with XRN2 (PubMed:24462208). Interacts (via G-patch domain) with DHX15; promoting the RNA helicase activity of DHX15 (PubMed:32179686).</text>
</comment>
<comment type="interaction">
    <interactant intactId="EBI-766011">
        <id>O15226</id>
    </interactant>
    <interactant intactId="EBI-12002366">
        <id>P78563-4</id>
        <label>ADARB1</label>
    </interactant>
    <organismsDiffer>false</organismsDiffer>
    <experiments>3</experiments>
</comment>
<comment type="interaction">
    <interactant intactId="EBI-766011">
        <id>O15226</id>
    </interactant>
    <interactant intactId="EBI-1237044">
        <id>O43143</id>
        <label>DHX15</label>
    </interactant>
    <organismsDiffer>false</organismsDiffer>
    <experiments>4</experiments>
</comment>
<comment type="interaction">
    <interactant intactId="EBI-766011">
        <id>O15226</id>
    </interactant>
    <interactant intactId="EBI-744193">
        <id>Q96C10</id>
        <label>DHX58</label>
    </interactant>
    <organismsDiffer>false</organismsDiffer>
    <experiments>2</experiments>
</comment>
<comment type="interaction">
    <interactant intactId="EBI-766011">
        <id>O15226</id>
    </interactant>
    <interactant intactId="EBI-713955">
        <id>O75569</id>
        <label>PRKRA</label>
    </interactant>
    <organismsDiffer>false</organismsDiffer>
    <experiments>6</experiments>
</comment>
<comment type="interaction">
    <interactant intactId="EBI-766011">
        <id>O15226</id>
    </interactant>
    <interactant intactId="EBI-358174">
        <id>O95793</id>
        <label>STAU1</label>
    </interactant>
    <organismsDiffer>false</organismsDiffer>
    <experiments>3</experiments>
</comment>
<comment type="interaction">
    <interactant intactId="EBI-766011">
        <id>O15226</id>
    </interactant>
    <interactant intactId="EBI-2462313">
        <id>Q9UL40</id>
        <label>ZNF346</label>
    </interactant>
    <organismsDiffer>false</organismsDiffer>
    <experiments>5</experiments>
</comment>
<comment type="interaction">
    <interactant intactId="EBI-766011">
        <id>O15226</id>
    </interactant>
    <interactant intactId="EBI-25475856">
        <id>P0DTC9</id>
        <label>N</label>
    </interactant>
    <organismsDiffer>true</organismsDiffer>
    <experiments>3</experiments>
</comment>
<comment type="interaction">
    <interactant intactId="EBI-766011">
        <id>O15226</id>
    </interactant>
    <interactant intactId="EBI-25475880">
        <id>PRO_0000449628</id>
        <label>rep</label>
        <dbReference type="UniProtKB" id="P0DTD1"/>
    </interactant>
    <organismsDiffer>true</organismsDiffer>
    <experiments>3</experiments>
</comment>
<comment type="subcellular location">
    <subcellularLocation>
        <location evidence="6">Nucleus</location>
        <location evidence="6">Nucleolus</location>
    </subcellularLocation>
</comment>
<comment type="alternative products">
    <event type="alternative splicing"/>
    <isoform>
        <id>O15226-1</id>
        <name>1</name>
        <sequence type="displayed"/>
    </isoform>
    <isoform>
        <id>O15226-2</id>
        <name>2</name>
        <sequence type="described" ref="VSP_047377"/>
    </isoform>
</comment>
<comment type="tissue specificity">
    <text evidence="4">Widely and constitutively expressed (PubMed:10562553). Expressed at lower level in colon, peripheral blood lymphocytes, lung and kidney (PubMed:10562553).</text>
</comment>
<comment type="sequence caution" evidence="12">
    <conflict type="miscellaneous discrepancy">
        <sequence resource="EMBL" id="AL539002"/>
    </conflict>
    <text>Probable cloning artifact.</text>
</comment>
<comment type="sequence caution" evidence="12">
    <conflict type="frameshift">
        <sequence resource="EMBL-CDS" id="CAB56459"/>
    </conflict>
</comment>
<keyword id="KW-0002">3D-structure</keyword>
<keyword id="KW-0025">Alternative splicing</keyword>
<keyword id="KW-0238">DNA-binding</keyword>
<keyword id="KW-1017">Isopeptide bond</keyword>
<keyword id="KW-0539">Nucleus</keyword>
<keyword id="KW-0597">Phosphoprotein</keyword>
<keyword id="KW-1267">Proteomics identification</keyword>
<keyword id="KW-1185">Reference proteome</keyword>
<keyword id="KW-0678">Repressor</keyword>
<keyword id="KW-0804">Transcription</keyword>
<keyword id="KW-0805">Transcription regulation</keyword>
<keyword id="KW-0832">Ubl conjugation</keyword>
<gene>
    <name evidence="10 13" type="primary">NKRF</name>
    <name type="synonym">ITBA4</name>
    <name evidence="9" type="synonym">NRF</name>
</gene>
<organism>
    <name type="scientific">Homo sapiens</name>
    <name type="common">Human</name>
    <dbReference type="NCBI Taxonomy" id="9606"/>
    <lineage>
        <taxon>Eukaryota</taxon>
        <taxon>Metazoa</taxon>
        <taxon>Chordata</taxon>
        <taxon>Craniata</taxon>
        <taxon>Vertebrata</taxon>
        <taxon>Euteleostomi</taxon>
        <taxon>Mammalia</taxon>
        <taxon>Eutheria</taxon>
        <taxon>Euarchontoglires</taxon>
        <taxon>Primates</taxon>
        <taxon>Haplorrhini</taxon>
        <taxon>Catarrhini</taxon>
        <taxon>Hominidae</taxon>
        <taxon>Homo</taxon>
    </lineage>
</organism>
<evidence type="ECO:0000255" key="1">
    <source>
        <dbReference type="PROSITE-ProRule" id="PRU00092"/>
    </source>
</evidence>
<evidence type="ECO:0000255" key="2">
    <source>
        <dbReference type="PROSITE-ProRule" id="PRU00382"/>
    </source>
</evidence>
<evidence type="ECO:0000256" key="3">
    <source>
        <dbReference type="SAM" id="MobiDB-lite"/>
    </source>
</evidence>
<evidence type="ECO:0000269" key="4">
    <source>
    </source>
</evidence>
<evidence type="ECO:0000269" key="5">
    <source>
    </source>
</evidence>
<evidence type="ECO:0000269" key="6">
    <source>
    </source>
</evidence>
<evidence type="ECO:0000269" key="7">
    <source>
    </source>
</evidence>
<evidence type="ECO:0000269" key="8">
    <source>
    </source>
</evidence>
<evidence type="ECO:0000303" key="9">
    <source>
    </source>
</evidence>
<evidence type="ECO:0000303" key="10">
    <source>
    </source>
</evidence>
<evidence type="ECO:0000303" key="11">
    <source ref="6"/>
</evidence>
<evidence type="ECO:0000305" key="12"/>
<evidence type="ECO:0000312" key="13">
    <source>
        <dbReference type="HGNC" id="HGNC:19374"/>
    </source>
</evidence>
<evidence type="ECO:0007744" key="14">
    <source>
        <dbReference type="PDB" id="6SH6"/>
    </source>
</evidence>
<evidence type="ECO:0007744" key="15">
    <source>
        <dbReference type="PDB" id="6SH7"/>
    </source>
</evidence>
<evidence type="ECO:0007744" key="16">
    <source>
    </source>
</evidence>
<evidence type="ECO:0007744" key="17">
    <source>
    </source>
</evidence>
<evidence type="ECO:0007744" key="18">
    <source>
    </source>
</evidence>
<evidence type="ECO:0007829" key="19">
    <source>
        <dbReference type="PDB" id="6SH6"/>
    </source>
</evidence>
<evidence type="ECO:0007829" key="20">
    <source>
        <dbReference type="PDB" id="6SH7"/>
    </source>
</evidence>
<proteinExistence type="evidence at protein level"/>
<accession>O15226</accession>
<accession>G3V1N1</accession>
<accession>Q4VC41</accession>
<accession>Q9UJ91</accession>
<name>NKRF_HUMAN</name>
<sequence length="690" mass="77673">MEKILQMAEGIDIGEMPSYDLVLSKPSKGQKRHLSTCDGQNPPKKQAGSKFHARPRFEPVHFVASSSKDERQEDPYGPQTKEVNEQTHFASMPRDIYQDYTQDSFSIQDGNSQYCDSSGFILTKDQPVTANMYFDSGNPAPSTTSQQANSQSTPEPSPSQTFPESVVAEKQYFIEKLTATIWKNLSNPEMTSGSDKINYTYMLTRCIQACKTNPEYIYAPLKEIPPADIPKNKKLLTDGYACEVRCQNIYLTTGYAGSKNGSRDRATELAVKLLQKRIEVRVVRRKFKHTFGEDLVVCQIGMSSYEFPPALKPPEDLVVLGKDASGQPIFNASAKHWTNFVITENANDAIGILNNSASFNKMSIEYKYEMMPNRTWRCRVFLQDHCLAEGYGTKKTSKHAAADEALKILQKTQPTYPSVKSSQCHTGSSPRGSGKKKDIKDLVVYENSSNPVCTLNDTAQFNRMTVEYVYERMTGLRWKCKVILESEVIAEAVGVKKTVKYEAAGEAVKTLKKTQPTVINNLKKGAVEDVISRNEIQGRSAEEAYKQQIKEDNIGNQLLRKMGWTGGGLGKSGEGIREPISVKEQHKREGLGLDVERVNKIAKRDIEQIIRNYARSESHTDLTFSRELTNDERKQIHQIAQKYGLKSKSHGVGHDRYLVVGRKRRKEDLLDQLKQEGQVGHYELVMPQAN</sequence>